<gene>
    <name evidence="1" type="primary">rpmD</name>
    <name type="ordered locus">BAA_0144</name>
</gene>
<organism>
    <name type="scientific">Bacillus anthracis (strain A0248)</name>
    <dbReference type="NCBI Taxonomy" id="592021"/>
    <lineage>
        <taxon>Bacteria</taxon>
        <taxon>Bacillati</taxon>
        <taxon>Bacillota</taxon>
        <taxon>Bacilli</taxon>
        <taxon>Bacillales</taxon>
        <taxon>Bacillaceae</taxon>
        <taxon>Bacillus</taxon>
        <taxon>Bacillus cereus group</taxon>
    </lineage>
</organism>
<evidence type="ECO:0000255" key="1">
    <source>
        <dbReference type="HAMAP-Rule" id="MF_01371"/>
    </source>
</evidence>
<evidence type="ECO:0000305" key="2"/>
<proteinExistence type="inferred from homology"/>
<sequence>MAKKLEITLTRSVIGRPQDQRATVEALGLKKLNSTVVKEETPAILGMINKVSHLVTVKEA</sequence>
<dbReference type="EMBL" id="CP001598">
    <property type="protein sequence ID" value="ACQ47906.1"/>
    <property type="molecule type" value="Genomic_DNA"/>
</dbReference>
<dbReference type="RefSeq" id="WP_001085234.1">
    <property type="nucleotide sequence ID" value="NC_012659.1"/>
</dbReference>
<dbReference type="SMR" id="C3P9S3"/>
<dbReference type="GeneID" id="93010925"/>
<dbReference type="KEGG" id="bai:BAA_0144"/>
<dbReference type="HOGENOM" id="CLU_131047_2_1_9"/>
<dbReference type="GO" id="GO:0022625">
    <property type="term" value="C:cytosolic large ribosomal subunit"/>
    <property type="evidence" value="ECO:0007669"/>
    <property type="project" value="TreeGrafter"/>
</dbReference>
<dbReference type="GO" id="GO:0003735">
    <property type="term" value="F:structural constituent of ribosome"/>
    <property type="evidence" value="ECO:0007669"/>
    <property type="project" value="InterPro"/>
</dbReference>
<dbReference type="GO" id="GO:0006412">
    <property type="term" value="P:translation"/>
    <property type="evidence" value="ECO:0007669"/>
    <property type="project" value="UniProtKB-UniRule"/>
</dbReference>
<dbReference type="CDD" id="cd01658">
    <property type="entry name" value="Ribosomal_L30"/>
    <property type="match status" value="1"/>
</dbReference>
<dbReference type="FunFam" id="3.30.1390.20:FF:000001">
    <property type="entry name" value="50S ribosomal protein L30"/>
    <property type="match status" value="1"/>
</dbReference>
<dbReference type="Gene3D" id="3.30.1390.20">
    <property type="entry name" value="Ribosomal protein L30, ferredoxin-like fold domain"/>
    <property type="match status" value="1"/>
</dbReference>
<dbReference type="HAMAP" id="MF_01371_B">
    <property type="entry name" value="Ribosomal_uL30_B"/>
    <property type="match status" value="1"/>
</dbReference>
<dbReference type="InterPro" id="IPR036919">
    <property type="entry name" value="Ribo_uL30_ferredoxin-like_sf"/>
</dbReference>
<dbReference type="InterPro" id="IPR005996">
    <property type="entry name" value="Ribosomal_uL30_bac-type"/>
</dbReference>
<dbReference type="InterPro" id="IPR018038">
    <property type="entry name" value="Ribosomal_uL30_CS"/>
</dbReference>
<dbReference type="InterPro" id="IPR016082">
    <property type="entry name" value="Ribosomal_uL30_ferredoxin-like"/>
</dbReference>
<dbReference type="NCBIfam" id="TIGR01308">
    <property type="entry name" value="rpmD_bact"/>
    <property type="match status" value="1"/>
</dbReference>
<dbReference type="PANTHER" id="PTHR15892:SF2">
    <property type="entry name" value="LARGE RIBOSOMAL SUBUNIT PROTEIN UL30M"/>
    <property type="match status" value="1"/>
</dbReference>
<dbReference type="PANTHER" id="PTHR15892">
    <property type="entry name" value="MITOCHONDRIAL RIBOSOMAL PROTEIN L30"/>
    <property type="match status" value="1"/>
</dbReference>
<dbReference type="Pfam" id="PF00327">
    <property type="entry name" value="Ribosomal_L30"/>
    <property type="match status" value="1"/>
</dbReference>
<dbReference type="PIRSF" id="PIRSF002211">
    <property type="entry name" value="Ribosomal_L30_bac-type"/>
    <property type="match status" value="1"/>
</dbReference>
<dbReference type="SUPFAM" id="SSF55129">
    <property type="entry name" value="Ribosomal protein L30p/L7e"/>
    <property type="match status" value="1"/>
</dbReference>
<dbReference type="PROSITE" id="PS00634">
    <property type="entry name" value="RIBOSOMAL_L30"/>
    <property type="match status" value="1"/>
</dbReference>
<name>RL30_BACAA</name>
<comment type="subunit">
    <text evidence="1">Part of the 50S ribosomal subunit.</text>
</comment>
<comment type="similarity">
    <text evidence="1">Belongs to the universal ribosomal protein uL30 family.</text>
</comment>
<protein>
    <recommendedName>
        <fullName evidence="1">Large ribosomal subunit protein uL30</fullName>
    </recommendedName>
    <alternativeName>
        <fullName evidence="2">50S ribosomal protein L30</fullName>
    </alternativeName>
</protein>
<accession>C3P9S3</accession>
<reference key="1">
    <citation type="submission" date="2009-04" db="EMBL/GenBank/DDBJ databases">
        <title>Genome sequence of Bacillus anthracis A0248.</title>
        <authorList>
            <person name="Dodson R.J."/>
            <person name="Munk A.C."/>
            <person name="Bruce D."/>
            <person name="Detter C."/>
            <person name="Tapia R."/>
            <person name="Sutton G."/>
            <person name="Sims D."/>
            <person name="Brettin T."/>
        </authorList>
    </citation>
    <scope>NUCLEOTIDE SEQUENCE [LARGE SCALE GENOMIC DNA]</scope>
    <source>
        <strain>A0248</strain>
    </source>
</reference>
<feature type="chain" id="PRO_1000184122" description="Large ribosomal subunit protein uL30">
    <location>
        <begin position="1"/>
        <end position="60"/>
    </location>
</feature>
<keyword id="KW-0687">Ribonucleoprotein</keyword>
<keyword id="KW-0689">Ribosomal protein</keyword>